<dbReference type="EMBL" id="AF022186">
    <property type="protein sequence ID" value="AAF12879.1"/>
    <property type="molecule type" value="Genomic_DNA"/>
</dbReference>
<dbReference type="SMR" id="Q9TLQ4"/>
<dbReference type="GO" id="GO:0009507">
    <property type="term" value="C:chloroplast"/>
    <property type="evidence" value="ECO:0007669"/>
    <property type="project" value="UniProtKB-SubCell"/>
</dbReference>
<dbReference type="GO" id="GO:0005829">
    <property type="term" value="C:cytosol"/>
    <property type="evidence" value="ECO:0007669"/>
    <property type="project" value="TreeGrafter"/>
</dbReference>
<dbReference type="GO" id="GO:0032993">
    <property type="term" value="C:protein-DNA complex"/>
    <property type="evidence" value="ECO:0007669"/>
    <property type="project" value="TreeGrafter"/>
</dbReference>
<dbReference type="GO" id="GO:0000156">
    <property type="term" value="F:phosphorelay response regulator activity"/>
    <property type="evidence" value="ECO:0007669"/>
    <property type="project" value="TreeGrafter"/>
</dbReference>
<dbReference type="GO" id="GO:0000976">
    <property type="term" value="F:transcription cis-regulatory region binding"/>
    <property type="evidence" value="ECO:0007669"/>
    <property type="project" value="TreeGrafter"/>
</dbReference>
<dbReference type="GO" id="GO:0006355">
    <property type="term" value="P:regulation of DNA-templated transcription"/>
    <property type="evidence" value="ECO:0007669"/>
    <property type="project" value="InterPro"/>
</dbReference>
<dbReference type="CDD" id="cd17574">
    <property type="entry name" value="REC_OmpR"/>
    <property type="match status" value="1"/>
</dbReference>
<dbReference type="CDD" id="cd00383">
    <property type="entry name" value="trans_reg_C"/>
    <property type="match status" value="1"/>
</dbReference>
<dbReference type="FunFam" id="3.40.50.2300:FF:000001">
    <property type="entry name" value="DNA-binding response regulator PhoB"/>
    <property type="match status" value="1"/>
</dbReference>
<dbReference type="Gene3D" id="3.40.50.2300">
    <property type="match status" value="1"/>
</dbReference>
<dbReference type="Gene3D" id="6.10.250.690">
    <property type="match status" value="1"/>
</dbReference>
<dbReference type="Gene3D" id="1.10.10.10">
    <property type="entry name" value="Winged helix-like DNA-binding domain superfamily/Winged helix DNA-binding domain"/>
    <property type="match status" value="1"/>
</dbReference>
<dbReference type="InterPro" id="IPR011006">
    <property type="entry name" value="CheY-like_superfamily"/>
</dbReference>
<dbReference type="InterPro" id="IPR001867">
    <property type="entry name" value="OmpR/PhoB-type_DNA-bd"/>
</dbReference>
<dbReference type="InterPro" id="IPR016032">
    <property type="entry name" value="Sig_transdc_resp-reg_C-effctor"/>
</dbReference>
<dbReference type="InterPro" id="IPR001789">
    <property type="entry name" value="Sig_transdc_resp-reg_receiver"/>
</dbReference>
<dbReference type="InterPro" id="IPR039420">
    <property type="entry name" value="WalR-like"/>
</dbReference>
<dbReference type="InterPro" id="IPR036388">
    <property type="entry name" value="WH-like_DNA-bd_sf"/>
</dbReference>
<dbReference type="NCBIfam" id="NF045944">
    <property type="entry name" value="ResRegRpaBCyano"/>
    <property type="match status" value="1"/>
</dbReference>
<dbReference type="PANTHER" id="PTHR48111:SF65">
    <property type="entry name" value="OMPR SUBFAMILY"/>
    <property type="match status" value="1"/>
</dbReference>
<dbReference type="PANTHER" id="PTHR48111">
    <property type="entry name" value="REGULATOR OF RPOS"/>
    <property type="match status" value="1"/>
</dbReference>
<dbReference type="Pfam" id="PF00072">
    <property type="entry name" value="Response_reg"/>
    <property type="match status" value="1"/>
</dbReference>
<dbReference type="Pfam" id="PF00486">
    <property type="entry name" value="Trans_reg_C"/>
    <property type="match status" value="1"/>
</dbReference>
<dbReference type="SMART" id="SM00448">
    <property type="entry name" value="REC"/>
    <property type="match status" value="1"/>
</dbReference>
<dbReference type="SMART" id="SM00862">
    <property type="entry name" value="Trans_reg_C"/>
    <property type="match status" value="1"/>
</dbReference>
<dbReference type="SUPFAM" id="SSF46894">
    <property type="entry name" value="C-terminal effector domain of the bipartite response regulators"/>
    <property type="match status" value="1"/>
</dbReference>
<dbReference type="SUPFAM" id="SSF52172">
    <property type="entry name" value="CheY-like"/>
    <property type="match status" value="1"/>
</dbReference>
<dbReference type="PROSITE" id="PS51755">
    <property type="entry name" value="OMPR_PHOB"/>
    <property type="match status" value="1"/>
</dbReference>
<dbReference type="PROSITE" id="PS50110">
    <property type="entry name" value="RESPONSE_REGULATORY"/>
    <property type="match status" value="1"/>
</dbReference>
<protein>
    <recommendedName>
        <fullName>Probable transcriptional regulator ycf27</fullName>
    </recommendedName>
    <alternativeName>
        <fullName>OmpR-like protein</fullName>
    </alternativeName>
</protein>
<geneLocation type="chloroplast"/>
<evidence type="ECO:0000250" key="1"/>
<evidence type="ECO:0000255" key="2">
    <source>
        <dbReference type="PROSITE-ProRule" id="PRU00169"/>
    </source>
</evidence>
<evidence type="ECO:0000255" key="3">
    <source>
        <dbReference type="PROSITE-ProRule" id="PRU01091"/>
    </source>
</evidence>
<proteinExistence type="inferred from homology"/>
<reference key="1">
    <citation type="journal article" date="2000" name="J. Mol. Evol.">
        <title>The structure and gene repertoire of an ancient red algal plastid genome.</title>
        <authorList>
            <person name="Gloeckner G."/>
            <person name="Rosenthal A."/>
            <person name="Valentin K.-U."/>
        </authorList>
    </citation>
    <scope>NUCLEOTIDE SEQUENCE [LARGE SCALE GENOMIC DNA]</scope>
    <source>
        <strain>RK-1</strain>
    </source>
</reference>
<comment type="function">
    <text>Probable promoter-specific protein mediating the interaction between DNA and RNA polymerase.</text>
</comment>
<comment type="subcellular location">
    <subcellularLocation>
        <location>Plastid</location>
        <location>Chloroplast</location>
    </subcellularLocation>
</comment>
<organism>
    <name type="scientific">Cyanidium caldarium</name>
    <name type="common">Red alga</name>
    <dbReference type="NCBI Taxonomy" id="2771"/>
    <lineage>
        <taxon>Eukaryota</taxon>
        <taxon>Rhodophyta</taxon>
        <taxon>Bangiophyceae</taxon>
        <taxon>Cyanidiales</taxon>
        <taxon>Cyanidiaceae</taxon>
        <taxon>Cyanidium</taxon>
    </lineage>
</organism>
<accession>Q9TLQ4</accession>
<gene>
    <name type="primary">ycf27</name>
    <name type="synonym">ycf47</name>
</gene>
<name>YCF27_CYACA</name>
<sequence>MRIENKQNKRQHHLLIVDDENNIRKILQTRLTLLGYSVSTACNGEEALKIFTTHSIDLIILDVMMPKLDGYGVCQEIRKESDIPIIMLTALEDVLDKVTGLELGADDYVIKPFSPRELEARIQSILRRIQTRNAKLKPYDNINLFKTGSLNIDLEKKQIYKNNELIRLTEMEFSLLELLVSQSGKAFSRSKILKEVWGYKLSKHEPIADTRIVDVHISRLRAKLEDDPTNPTLILTARGTGYLCRKLIT</sequence>
<keyword id="KW-0150">Chloroplast</keyword>
<keyword id="KW-0238">DNA-binding</keyword>
<keyword id="KW-0597">Phosphoprotein</keyword>
<keyword id="KW-0934">Plastid</keyword>
<keyword id="KW-0804">Transcription</keyword>
<keyword id="KW-0805">Transcription regulation</keyword>
<keyword id="KW-0902">Two-component regulatory system</keyword>
<feature type="chain" id="PRO_0000081349" description="Probable transcriptional regulator ycf27">
    <location>
        <begin position="1"/>
        <end position="249"/>
    </location>
</feature>
<feature type="domain" description="Response regulatory" evidence="2">
    <location>
        <begin position="13"/>
        <end position="126"/>
    </location>
</feature>
<feature type="DNA-binding region" description="H-T-H motif" evidence="1">
    <location>
        <begin position="82"/>
        <end position="100"/>
    </location>
</feature>
<feature type="DNA-binding region" description="OmpR/PhoB-type" evidence="3">
    <location>
        <begin position="142"/>
        <end position="246"/>
    </location>
</feature>
<feature type="modified residue" description="4-aspartylphosphate" evidence="2">
    <location>
        <position position="62"/>
    </location>
</feature>